<gene>
    <name type="primary">ndhG</name>
</gene>
<feature type="chain" id="PRO_0000360263" description="NAD(P)H-quinone oxidoreductase subunit 6, chloroplastic">
    <location>
        <begin position="1"/>
        <end position="177"/>
    </location>
</feature>
<feature type="transmembrane region" description="Helical" evidence="2">
    <location>
        <begin position="10"/>
        <end position="30"/>
    </location>
</feature>
<feature type="transmembrane region" description="Helical" evidence="2">
    <location>
        <begin position="33"/>
        <end position="53"/>
    </location>
</feature>
<feature type="transmembrane region" description="Helical" evidence="2">
    <location>
        <begin position="61"/>
        <end position="81"/>
    </location>
</feature>
<feature type="transmembrane region" description="Helical" evidence="2">
    <location>
        <begin position="92"/>
        <end position="112"/>
    </location>
</feature>
<feature type="transmembrane region" description="Helical" evidence="2">
    <location>
        <begin position="152"/>
        <end position="172"/>
    </location>
</feature>
<protein>
    <recommendedName>
        <fullName>NAD(P)H-quinone oxidoreductase subunit 6, chloroplastic</fullName>
        <ecNumber>7.1.1.-</ecNumber>
    </recommendedName>
    <alternativeName>
        <fullName>NAD(P)H dehydrogenase subunit 6</fullName>
    </alternativeName>
    <alternativeName>
        <fullName>NADH-plastoquinone oxidoreductase subunit 6</fullName>
    </alternativeName>
</protein>
<name>NU6C_LEMMI</name>
<reference key="1">
    <citation type="journal article" date="2008" name="J. Mol. Evol.">
        <title>Complete sequence of the Duckweed (Lemna minor) chloroplast genome: structural organization and phylogenetic relationships to other angiosperms.</title>
        <authorList>
            <person name="Mardanov A.V."/>
            <person name="Ravin N.V."/>
            <person name="Kuznetsov B.B."/>
            <person name="Samigullin T.H."/>
            <person name="Antonov A.S."/>
            <person name="Kolganova T.V."/>
            <person name="Skyabin K.G."/>
        </authorList>
    </citation>
    <scope>NUCLEOTIDE SEQUENCE [LARGE SCALE GENOMIC DNA]</scope>
</reference>
<dbReference type="EC" id="7.1.1.-"/>
<dbReference type="EMBL" id="DQ400350">
    <property type="protein sequence ID" value="ABD48549.1"/>
    <property type="molecule type" value="Genomic_DNA"/>
</dbReference>
<dbReference type="RefSeq" id="YP_001595562.1">
    <property type="nucleotide sequence ID" value="NC_010109.1"/>
</dbReference>
<dbReference type="SMR" id="A9L9F0"/>
<dbReference type="GeneID" id="5787551"/>
<dbReference type="GO" id="GO:0009535">
    <property type="term" value="C:chloroplast thylakoid membrane"/>
    <property type="evidence" value="ECO:0007669"/>
    <property type="project" value="UniProtKB-SubCell"/>
</dbReference>
<dbReference type="GO" id="GO:0008137">
    <property type="term" value="F:NADH dehydrogenase (ubiquinone) activity"/>
    <property type="evidence" value="ECO:0007669"/>
    <property type="project" value="InterPro"/>
</dbReference>
<dbReference type="GO" id="GO:0048038">
    <property type="term" value="F:quinone binding"/>
    <property type="evidence" value="ECO:0007669"/>
    <property type="project" value="UniProtKB-KW"/>
</dbReference>
<dbReference type="FunFam" id="1.20.120.1200:FF:000002">
    <property type="entry name" value="NAD(P)H-quinone oxidoreductase subunit 6, chloroplastic"/>
    <property type="match status" value="1"/>
</dbReference>
<dbReference type="Gene3D" id="1.20.120.1200">
    <property type="entry name" value="NADH-ubiquinone/plastoquinone oxidoreductase chain 6, subunit NuoJ"/>
    <property type="match status" value="1"/>
</dbReference>
<dbReference type="InterPro" id="IPR050290">
    <property type="entry name" value="NAD(P)H-Q_Oxidoreduct_6"/>
</dbReference>
<dbReference type="InterPro" id="IPR001457">
    <property type="entry name" value="NADH_UbQ/plastoQ_OxRdtase_su6"/>
</dbReference>
<dbReference type="InterPro" id="IPR042106">
    <property type="entry name" value="Nuo/plastoQ_OxRdtase_6_NuoJ"/>
</dbReference>
<dbReference type="PANTHER" id="PTHR48479">
    <property type="entry name" value="NAD(P)H-QUINONE OXIDOREDUCTASE SUBUNIT 6, CHLOROPLASTIC"/>
    <property type="match status" value="1"/>
</dbReference>
<dbReference type="PANTHER" id="PTHR48479:SF1">
    <property type="entry name" value="NAD(P)H-QUINONE OXIDOREDUCTASE SUBUNIT 6, CHLOROPLASTIC"/>
    <property type="match status" value="1"/>
</dbReference>
<dbReference type="Pfam" id="PF00499">
    <property type="entry name" value="Oxidored_q3"/>
    <property type="match status" value="1"/>
</dbReference>
<sequence length="177" mass="19347">MDLTGPIHDILVVFLGLVLILGGLGVVLFTNPIYSAFSLGLVLICVSLFYILLNSYFVAAAQLLIYVGAINVLILFAVMFMKGSEYSNDLNLWTVGDGVTSLVCTSILFLLISTISDTSWYGIIWTTKANHIIEQDLISNVQQIGIHLSTDFFLPFELISIILLVALIGAISMARQN</sequence>
<evidence type="ECO:0000250" key="1"/>
<evidence type="ECO:0000255" key="2"/>
<evidence type="ECO:0000305" key="3"/>
<keyword id="KW-0150">Chloroplast</keyword>
<keyword id="KW-0472">Membrane</keyword>
<keyword id="KW-0520">NAD</keyword>
<keyword id="KW-0521">NADP</keyword>
<keyword id="KW-0934">Plastid</keyword>
<keyword id="KW-0618">Plastoquinone</keyword>
<keyword id="KW-0874">Quinone</keyword>
<keyword id="KW-0793">Thylakoid</keyword>
<keyword id="KW-1278">Translocase</keyword>
<keyword id="KW-0812">Transmembrane</keyword>
<keyword id="KW-1133">Transmembrane helix</keyword>
<keyword id="KW-0813">Transport</keyword>
<accession>A9L9F0</accession>
<geneLocation type="chloroplast"/>
<proteinExistence type="inferred from homology"/>
<organism>
    <name type="scientific">Lemna minor</name>
    <name type="common">Common duckweed</name>
    <dbReference type="NCBI Taxonomy" id="4472"/>
    <lineage>
        <taxon>Eukaryota</taxon>
        <taxon>Viridiplantae</taxon>
        <taxon>Streptophyta</taxon>
        <taxon>Embryophyta</taxon>
        <taxon>Tracheophyta</taxon>
        <taxon>Spermatophyta</taxon>
        <taxon>Magnoliopsida</taxon>
        <taxon>Liliopsida</taxon>
        <taxon>Araceae</taxon>
        <taxon>Lemnoideae</taxon>
        <taxon>Lemna</taxon>
    </lineage>
</organism>
<comment type="function">
    <text evidence="1">NDH shuttles electrons from NAD(P)H:plastoquinone, via FMN and iron-sulfur (Fe-S) centers, to quinones in the photosynthetic chain and possibly in a chloroplast respiratory chain. The immediate electron acceptor for the enzyme in this species is believed to be plastoquinone. Couples the redox reaction to proton translocation, and thus conserves the redox energy in a proton gradient (By similarity).</text>
</comment>
<comment type="catalytic activity">
    <reaction>
        <text>a plastoquinone + NADH + (n+1) H(+)(in) = a plastoquinol + NAD(+) + n H(+)(out)</text>
        <dbReference type="Rhea" id="RHEA:42608"/>
        <dbReference type="Rhea" id="RHEA-COMP:9561"/>
        <dbReference type="Rhea" id="RHEA-COMP:9562"/>
        <dbReference type="ChEBI" id="CHEBI:15378"/>
        <dbReference type="ChEBI" id="CHEBI:17757"/>
        <dbReference type="ChEBI" id="CHEBI:57540"/>
        <dbReference type="ChEBI" id="CHEBI:57945"/>
        <dbReference type="ChEBI" id="CHEBI:62192"/>
    </reaction>
</comment>
<comment type="catalytic activity">
    <reaction>
        <text>a plastoquinone + NADPH + (n+1) H(+)(in) = a plastoquinol + NADP(+) + n H(+)(out)</text>
        <dbReference type="Rhea" id="RHEA:42612"/>
        <dbReference type="Rhea" id="RHEA-COMP:9561"/>
        <dbReference type="Rhea" id="RHEA-COMP:9562"/>
        <dbReference type="ChEBI" id="CHEBI:15378"/>
        <dbReference type="ChEBI" id="CHEBI:17757"/>
        <dbReference type="ChEBI" id="CHEBI:57783"/>
        <dbReference type="ChEBI" id="CHEBI:58349"/>
        <dbReference type="ChEBI" id="CHEBI:62192"/>
    </reaction>
</comment>
<comment type="subunit">
    <text evidence="1">NDH is composed of at least 16 different subunits, 5 of which are encoded in the nucleus.</text>
</comment>
<comment type="subcellular location">
    <subcellularLocation>
        <location evidence="1">Plastid</location>
        <location evidence="1">Chloroplast thylakoid membrane</location>
        <topology evidence="1">Multi-pass membrane protein</topology>
    </subcellularLocation>
</comment>
<comment type="similarity">
    <text evidence="3">Belongs to the complex I subunit 6 family.</text>
</comment>